<proteinExistence type="inferred from homology"/>
<comment type="function">
    <text evidence="1">Bifunctional enzyme with both catalase and broad-spectrum peroxidase activity.</text>
</comment>
<comment type="catalytic activity">
    <reaction evidence="1">
        <text>H2O2 + AH2 = A + 2 H2O</text>
        <dbReference type="Rhea" id="RHEA:30275"/>
        <dbReference type="ChEBI" id="CHEBI:13193"/>
        <dbReference type="ChEBI" id="CHEBI:15377"/>
        <dbReference type="ChEBI" id="CHEBI:16240"/>
        <dbReference type="ChEBI" id="CHEBI:17499"/>
        <dbReference type="EC" id="1.11.1.21"/>
    </reaction>
</comment>
<comment type="catalytic activity">
    <reaction evidence="1">
        <text>2 H2O2 = O2 + 2 H2O</text>
        <dbReference type="Rhea" id="RHEA:20309"/>
        <dbReference type="ChEBI" id="CHEBI:15377"/>
        <dbReference type="ChEBI" id="CHEBI:15379"/>
        <dbReference type="ChEBI" id="CHEBI:16240"/>
        <dbReference type="EC" id="1.11.1.21"/>
    </reaction>
</comment>
<comment type="cofactor">
    <cofactor evidence="1">
        <name>heme b</name>
        <dbReference type="ChEBI" id="CHEBI:60344"/>
    </cofactor>
    <text evidence="1">Binds 1 heme b (iron(II)-protoporphyrin IX) group per monomer.</text>
</comment>
<comment type="subunit">
    <text evidence="1">Homodimer or homotetramer.</text>
</comment>
<comment type="subcellular location">
    <subcellularLocation>
        <location evidence="1">Cytoplasm</location>
    </subcellularLocation>
</comment>
<comment type="PTM">
    <text evidence="1">Formation of the three residue Trp-Tyr-Met cross-link is important for the catalase, but not the peroxidase activity of the enzyme.</text>
</comment>
<comment type="similarity">
    <text evidence="1">Belongs to the peroxidase family. Peroxidase/catalase subfamily.</text>
</comment>
<comment type="sequence caution" evidence="2">
    <conflict type="erroneous initiation">
        <sequence resource="EMBL-CDS" id="AAL56991"/>
    </conflict>
</comment>
<gene>
    <name evidence="1" type="primary">katG</name>
    <name type="synonym">CPX</name>
</gene>
<protein>
    <recommendedName>
        <fullName evidence="1">Catalase-peroxidase</fullName>
        <shortName evidence="1">CP</shortName>
        <ecNumber evidence="1">1.11.1.21</ecNumber>
    </recommendedName>
    <alternativeName>
        <fullName evidence="1">Peroxidase/catalase</fullName>
    </alternativeName>
</protein>
<keyword id="KW-0963">Cytoplasm</keyword>
<keyword id="KW-0349">Heme</keyword>
<keyword id="KW-0376">Hydrogen peroxide</keyword>
<keyword id="KW-0408">Iron</keyword>
<keyword id="KW-0479">Metal-binding</keyword>
<keyword id="KW-0560">Oxidoreductase</keyword>
<keyword id="KW-0575">Peroxidase</keyword>
<name>KATG_BLUHO</name>
<sequence length="730" mass="81024">MGDSKCPYRDANVAGGGTHNKDWWPETLKLDALRQHTAESNPLGKDFDYASAFKTLDYEGLKKDLKDLMTDSQDWWPADFGHYGGFFVRMAWHSAGTYRSIDGRGGGGQGQHRFAPLNSWPDNGNLDKARRLLWPIKQKYGNKISWADLYLLTGNVAIESMGGKTFGFACGRPDTWEADDATFWGNETKWLGNDARYKNGSKDPKDIYTRQLEKPLSAVHMGLIYVNPEGPDGIPDPVASARDIRTTFRRMAMNDEETVALIAGGHTFGKTHGAAPATHLGKEPEGAPIEAQGLGWANSYRSGKGPDTITSGLEVIWTKTPINWSNHYLEYLFKYDWELTKSPGGANQWTAKNAEAFIPDAFDPNKKHPPRMLTTDLALRHDKEYEKISLRFLENPDQFADAFARAWFKLLHRDMGPRSRWLGPEIPKEELIWEDPIPEIDHPIISQEDINNLKKEILSSGVGHNKLIQTAWASASTFRGGDKRGGANGARIRLAPQKDWKVNNPPQLTCVLETLGKIQSSFNSSQTGGKIVSLADLIILAGCAALEKAAGVPVPFSPGRADASQEQTDIKSFSNLEPVADGFRNFGRSTPRARAEHMLVDRAQLLTLTPPELTALVGGLRVLDTNFDGSSCGVFTKRPGQLTNDFFVNLLDPAISWKGIDEDEFFEGIDRKTDEKKWIGSRADLVFGSQAELRAIAEVYGSADGNEKLIKDFIAAWNKVMNLDLFNLAH</sequence>
<evidence type="ECO:0000255" key="1">
    <source>
        <dbReference type="HAMAP-Rule" id="MF_03108"/>
    </source>
</evidence>
<evidence type="ECO:0000305" key="2"/>
<dbReference type="EC" id="1.11.1.21" evidence="1"/>
<dbReference type="EMBL" id="AF329396">
    <property type="protein sequence ID" value="AAL56991.1"/>
    <property type="status" value="ALT_INIT"/>
    <property type="molecule type" value="Genomic_DNA"/>
</dbReference>
<dbReference type="SMR" id="Q8X1N3"/>
<dbReference type="PeroxiBase" id="1960">
    <property type="entry name" value="BgCP"/>
</dbReference>
<dbReference type="EnsemblFungi" id="BLGH_02667-mRNA-1">
    <property type="protein sequence ID" value="BLGH_02667-mRNA-1"/>
    <property type="gene ID" value="BLGH_02667"/>
</dbReference>
<dbReference type="VEuPathDB" id="FungiDB:BLGHR1_15849"/>
<dbReference type="GO" id="GO:0005829">
    <property type="term" value="C:cytosol"/>
    <property type="evidence" value="ECO:0007669"/>
    <property type="project" value="TreeGrafter"/>
</dbReference>
<dbReference type="GO" id="GO:0004096">
    <property type="term" value="F:catalase activity"/>
    <property type="evidence" value="ECO:0007669"/>
    <property type="project" value="UniProtKB-UniRule"/>
</dbReference>
<dbReference type="GO" id="GO:0020037">
    <property type="term" value="F:heme binding"/>
    <property type="evidence" value="ECO:0007669"/>
    <property type="project" value="InterPro"/>
</dbReference>
<dbReference type="GO" id="GO:0046872">
    <property type="term" value="F:metal ion binding"/>
    <property type="evidence" value="ECO:0007669"/>
    <property type="project" value="UniProtKB-KW"/>
</dbReference>
<dbReference type="GO" id="GO:0070301">
    <property type="term" value="P:cellular response to hydrogen peroxide"/>
    <property type="evidence" value="ECO:0007669"/>
    <property type="project" value="TreeGrafter"/>
</dbReference>
<dbReference type="GO" id="GO:0042744">
    <property type="term" value="P:hydrogen peroxide catabolic process"/>
    <property type="evidence" value="ECO:0007669"/>
    <property type="project" value="UniProtKB-KW"/>
</dbReference>
<dbReference type="CDD" id="cd00649">
    <property type="entry name" value="catalase_peroxidase_1"/>
    <property type="match status" value="1"/>
</dbReference>
<dbReference type="CDD" id="cd08200">
    <property type="entry name" value="catalase_peroxidase_2"/>
    <property type="match status" value="1"/>
</dbReference>
<dbReference type="FunFam" id="1.10.420.10:FF:000002">
    <property type="entry name" value="Catalase-peroxidase"/>
    <property type="match status" value="1"/>
</dbReference>
<dbReference type="FunFam" id="1.10.420.10:FF:000004">
    <property type="entry name" value="Catalase-peroxidase"/>
    <property type="match status" value="1"/>
</dbReference>
<dbReference type="FunFam" id="1.10.520.10:FF:000002">
    <property type="entry name" value="Catalase-peroxidase"/>
    <property type="match status" value="1"/>
</dbReference>
<dbReference type="Gene3D" id="1.10.520.10">
    <property type="match status" value="2"/>
</dbReference>
<dbReference type="Gene3D" id="1.10.420.10">
    <property type="entry name" value="Peroxidase, domain 2"/>
    <property type="match status" value="2"/>
</dbReference>
<dbReference type="HAMAP" id="MF_01961">
    <property type="entry name" value="Catal_peroxid"/>
    <property type="match status" value="1"/>
</dbReference>
<dbReference type="InterPro" id="IPR000763">
    <property type="entry name" value="Catalase_peroxidase"/>
</dbReference>
<dbReference type="InterPro" id="IPR002016">
    <property type="entry name" value="Haem_peroxidase"/>
</dbReference>
<dbReference type="InterPro" id="IPR010255">
    <property type="entry name" value="Haem_peroxidase_sf"/>
</dbReference>
<dbReference type="InterPro" id="IPR019794">
    <property type="entry name" value="Peroxidases_AS"/>
</dbReference>
<dbReference type="InterPro" id="IPR019793">
    <property type="entry name" value="Peroxidases_heam-ligand_BS"/>
</dbReference>
<dbReference type="NCBIfam" id="TIGR00198">
    <property type="entry name" value="cat_per_HPI"/>
    <property type="match status" value="1"/>
</dbReference>
<dbReference type="NCBIfam" id="NF011635">
    <property type="entry name" value="PRK15061.1"/>
    <property type="match status" value="1"/>
</dbReference>
<dbReference type="PANTHER" id="PTHR30555:SF0">
    <property type="entry name" value="CATALASE-PEROXIDASE"/>
    <property type="match status" value="1"/>
</dbReference>
<dbReference type="PANTHER" id="PTHR30555">
    <property type="entry name" value="HYDROPEROXIDASE I, BIFUNCTIONAL CATALASE-PEROXIDASE"/>
    <property type="match status" value="1"/>
</dbReference>
<dbReference type="Pfam" id="PF00141">
    <property type="entry name" value="peroxidase"/>
    <property type="match status" value="2"/>
</dbReference>
<dbReference type="PRINTS" id="PR00460">
    <property type="entry name" value="BPEROXIDASE"/>
</dbReference>
<dbReference type="PRINTS" id="PR00458">
    <property type="entry name" value="PEROXIDASE"/>
</dbReference>
<dbReference type="SUPFAM" id="SSF48113">
    <property type="entry name" value="Heme-dependent peroxidases"/>
    <property type="match status" value="2"/>
</dbReference>
<dbReference type="PROSITE" id="PS00435">
    <property type="entry name" value="PEROXIDASE_1"/>
    <property type="match status" value="1"/>
</dbReference>
<dbReference type="PROSITE" id="PS00436">
    <property type="entry name" value="PEROXIDASE_2"/>
    <property type="match status" value="1"/>
</dbReference>
<dbReference type="PROSITE" id="PS50873">
    <property type="entry name" value="PEROXIDASE_4"/>
    <property type="match status" value="1"/>
</dbReference>
<organism>
    <name type="scientific">Blumeria hordei</name>
    <name type="common">Barley powdery mildew</name>
    <name type="synonym">Blumeria graminis f. sp. hordei</name>
    <dbReference type="NCBI Taxonomy" id="2867405"/>
    <lineage>
        <taxon>Eukaryota</taxon>
        <taxon>Fungi</taxon>
        <taxon>Dikarya</taxon>
        <taxon>Ascomycota</taxon>
        <taxon>Pezizomycotina</taxon>
        <taxon>Leotiomycetes</taxon>
        <taxon>Erysiphales</taxon>
        <taxon>Erysiphaceae</taxon>
        <taxon>Blumeria</taxon>
    </lineage>
</organism>
<reference key="1">
    <citation type="journal article" date="2004" name="Mol. Plant Pathol.">
        <title>Blumeria graminis secretes an extracellular catalase during infection of barley: potential role in suppression of host defence.</title>
        <authorList>
            <person name="Zhang Z."/>
            <person name="Henderson C."/>
            <person name="Gurr S.J."/>
        </authorList>
    </citation>
    <scope>NUCLEOTIDE SEQUENCE [GENOMIC DNA]</scope>
    <source>
        <strain>IM82</strain>
    </source>
</reference>
<accession>Q8X1N3</accession>
<feature type="chain" id="PRO_0000354104" description="Catalase-peroxidase">
    <location>
        <begin position="1"/>
        <end position="730"/>
    </location>
</feature>
<feature type="active site" description="Proton acceptor" evidence="1">
    <location>
        <position position="93"/>
    </location>
</feature>
<feature type="binding site" description="axial binding residue" evidence="1">
    <location>
        <position position="266"/>
    </location>
    <ligand>
        <name>heme b</name>
        <dbReference type="ChEBI" id="CHEBI:60344"/>
    </ligand>
    <ligandPart>
        <name>Fe</name>
        <dbReference type="ChEBI" id="CHEBI:18248"/>
    </ligandPart>
</feature>
<feature type="site" description="Transition state stabilizer" evidence="1">
    <location>
        <position position="89"/>
    </location>
</feature>
<feature type="cross-link" description="Tryptophyl-tyrosyl-methioninium (Trp-Tyr) (with M-251)" evidence="1">
    <location>
        <begin position="92"/>
        <end position="225"/>
    </location>
</feature>
<feature type="cross-link" description="Tryptophyl-tyrosyl-methioninium (Tyr-Met) (with W-92)" evidence="1">
    <location>
        <begin position="225"/>
        <end position="251"/>
    </location>
</feature>